<feature type="chain" id="PRO_1000197069" description="N-(5'-phosphoribosyl)anthranilate isomerase">
    <location>
        <begin position="1"/>
        <end position="205"/>
    </location>
</feature>
<evidence type="ECO:0000255" key="1">
    <source>
        <dbReference type="HAMAP-Rule" id="MF_00135"/>
    </source>
</evidence>
<gene>
    <name evidence="1" type="primary">trpF</name>
    <name type="ordered locus">Acry_1722</name>
</gene>
<keyword id="KW-0028">Amino-acid biosynthesis</keyword>
<keyword id="KW-0057">Aromatic amino acid biosynthesis</keyword>
<keyword id="KW-0413">Isomerase</keyword>
<keyword id="KW-1185">Reference proteome</keyword>
<keyword id="KW-0822">Tryptophan biosynthesis</keyword>
<comment type="catalytic activity">
    <reaction evidence="1">
        <text>N-(5-phospho-beta-D-ribosyl)anthranilate = 1-(2-carboxyphenylamino)-1-deoxy-D-ribulose 5-phosphate</text>
        <dbReference type="Rhea" id="RHEA:21540"/>
        <dbReference type="ChEBI" id="CHEBI:18277"/>
        <dbReference type="ChEBI" id="CHEBI:58613"/>
        <dbReference type="EC" id="5.3.1.24"/>
    </reaction>
</comment>
<comment type="pathway">
    <text evidence="1">Amino-acid biosynthesis; L-tryptophan biosynthesis; L-tryptophan from chorismate: step 3/5.</text>
</comment>
<comment type="similarity">
    <text evidence="1">Belongs to the TrpF family.</text>
</comment>
<sequence length="205" mass="21466">MARAKICGLRTRETWLAATDAGADWVGFVFFPRSPRFVTIEALKAIGADARVPRVGLFVDPEPAAIEAVLKVQDLEFLQIYAGAEACRAMRARFGAKVWRAVGVASAADLPRDDEGLDGFLIESKPPRGADRPGGNATAFDWAVMQGWRAPAPWLLAGGLTPANVAAAVRASGAAAVDVSSGVESAPGEKSVPLIRDFVAAAHAA</sequence>
<protein>
    <recommendedName>
        <fullName evidence="1">N-(5'-phosphoribosyl)anthranilate isomerase</fullName>
        <shortName evidence="1">PRAI</shortName>
        <ecNumber evidence="1">5.3.1.24</ecNumber>
    </recommendedName>
</protein>
<organism>
    <name type="scientific">Acidiphilium cryptum (strain JF-5)</name>
    <dbReference type="NCBI Taxonomy" id="349163"/>
    <lineage>
        <taxon>Bacteria</taxon>
        <taxon>Pseudomonadati</taxon>
        <taxon>Pseudomonadota</taxon>
        <taxon>Alphaproteobacteria</taxon>
        <taxon>Acetobacterales</taxon>
        <taxon>Acidocellaceae</taxon>
        <taxon>Acidiphilium</taxon>
    </lineage>
</organism>
<dbReference type="EC" id="5.3.1.24" evidence="1"/>
<dbReference type="EMBL" id="CP000697">
    <property type="protein sequence ID" value="ABQ30926.1"/>
    <property type="molecule type" value="Genomic_DNA"/>
</dbReference>
<dbReference type="RefSeq" id="WP_011942442.1">
    <property type="nucleotide sequence ID" value="NC_009484.1"/>
</dbReference>
<dbReference type="SMR" id="A5FZ94"/>
<dbReference type="STRING" id="349163.Acry_1722"/>
<dbReference type="KEGG" id="acr:Acry_1722"/>
<dbReference type="eggNOG" id="COG0135">
    <property type="taxonomic scope" value="Bacteria"/>
</dbReference>
<dbReference type="HOGENOM" id="CLU_076364_1_1_5"/>
<dbReference type="UniPathway" id="UPA00035">
    <property type="reaction ID" value="UER00042"/>
</dbReference>
<dbReference type="Proteomes" id="UP000000245">
    <property type="component" value="Chromosome"/>
</dbReference>
<dbReference type="GO" id="GO:0004640">
    <property type="term" value="F:phosphoribosylanthranilate isomerase activity"/>
    <property type="evidence" value="ECO:0007669"/>
    <property type="project" value="UniProtKB-UniRule"/>
</dbReference>
<dbReference type="GO" id="GO:0000162">
    <property type="term" value="P:L-tryptophan biosynthetic process"/>
    <property type="evidence" value="ECO:0007669"/>
    <property type="project" value="UniProtKB-UniRule"/>
</dbReference>
<dbReference type="CDD" id="cd00405">
    <property type="entry name" value="PRAI"/>
    <property type="match status" value="1"/>
</dbReference>
<dbReference type="Gene3D" id="3.20.20.70">
    <property type="entry name" value="Aldolase class I"/>
    <property type="match status" value="1"/>
</dbReference>
<dbReference type="HAMAP" id="MF_00135">
    <property type="entry name" value="PRAI"/>
    <property type="match status" value="1"/>
</dbReference>
<dbReference type="InterPro" id="IPR013785">
    <property type="entry name" value="Aldolase_TIM"/>
</dbReference>
<dbReference type="InterPro" id="IPR001240">
    <property type="entry name" value="PRAI_dom"/>
</dbReference>
<dbReference type="InterPro" id="IPR011060">
    <property type="entry name" value="RibuloseP-bd_barrel"/>
</dbReference>
<dbReference type="InterPro" id="IPR044643">
    <property type="entry name" value="TrpF_fam"/>
</dbReference>
<dbReference type="PANTHER" id="PTHR42894">
    <property type="entry name" value="N-(5'-PHOSPHORIBOSYL)ANTHRANILATE ISOMERASE"/>
    <property type="match status" value="1"/>
</dbReference>
<dbReference type="PANTHER" id="PTHR42894:SF1">
    <property type="entry name" value="N-(5'-PHOSPHORIBOSYL)ANTHRANILATE ISOMERASE"/>
    <property type="match status" value="1"/>
</dbReference>
<dbReference type="Pfam" id="PF00697">
    <property type="entry name" value="PRAI"/>
    <property type="match status" value="1"/>
</dbReference>
<dbReference type="SUPFAM" id="SSF51366">
    <property type="entry name" value="Ribulose-phoshate binding barrel"/>
    <property type="match status" value="1"/>
</dbReference>
<name>TRPF_ACICJ</name>
<accession>A5FZ94</accession>
<proteinExistence type="inferred from homology"/>
<reference key="1">
    <citation type="submission" date="2007-05" db="EMBL/GenBank/DDBJ databases">
        <title>Complete sequence of chromosome of Acidiphilium cryptum JF-5.</title>
        <authorList>
            <consortium name="US DOE Joint Genome Institute"/>
            <person name="Copeland A."/>
            <person name="Lucas S."/>
            <person name="Lapidus A."/>
            <person name="Barry K."/>
            <person name="Detter J.C."/>
            <person name="Glavina del Rio T."/>
            <person name="Hammon N."/>
            <person name="Israni S."/>
            <person name="Dalin E."/>
            <person name="Tice H."/>
            <person name="Pitluck S."/>
            <person name="Sims D."/>
            <person name="Brettin T."/>
            <person name="Bruce D."/>
            <person name="Han C."/>
            <person name="Schmutz J."/>
            <person name="Larimer F."/>
            <person name="Land M."/>
            <person name="Hauser L."/>
            <person name="Kyrpides N."/>
            <person name="Kim E."/>
            <person name="Magnuson T."/>
            <person name="Richardson P."/>
        </authorList>
    </citation>
    <scope>NUCLEOTIDE SEQUENCE [LARGE SCALE GENOMIC DNA]</scope>
    <source>
        <strain>JF-5</strain>
    </source>
</reference>